<reference key="1">
    <citation type="journal article" date="1990" name="Virology">
        <title>The complete DNA sequence of vaccinia virus.</title>
        <authorList>
            <person name="Goebel S.J."/>
            <person name="Johnson G.P."/>
            <person name="Perkus M.E."/>
            <person name="Davis S.W."/>
            <person name="Winslow J.P."/>
            <person name="Paoletti E."/>
        </authorList>
    </citation>
    <scope>NUCLEOTIDE SEQUENCE [LARGE SCALE GENOMIC DNA]</scope>
</reference>
<reference key="2">
    <citation type="journal article" date="1990" name="Virology">
        <title>Appendix to 'The complete DNA sequence of vaccinia virus'.</title>
        <authorList>
            <person name="Goebel S.J."/>
            <person name="Johnson G.P."/>
            <person name="Perkus M.E."/>
            <person name="Davis S.W."/>
            <person name="Winslow J.P."/>
            <person name="Paoletti E."/>
        </authorList>
    </citation>
    <scope>COMPLETE GENOME</scope>
</reference>
<name>YVFE_VACCC</name>
<organism>
    <name type="scientific">Vaccinia virus (strain Copenhagen)</name>
    <name type="common">VACV</name>
    <dbReference type="NCBI Taxonomy" id="10249"/>
    <lineage>
        <taxon>Viruses</taxon>
        <taxon>Varidnaviria</taxon>
        <taxon>Bamfordvirae</taxon>
        <taxon>Nucleocytoviricota</taxon>
        <taxon>Pokkesviricetes</taxon>
        <taxon>Chitovirales</taxon>
        <taxon>Poxviridae</taxon>
        <taxon>Chordopoxvirinae</taxon>
        <taxon>Orthopoxvirus</taxon>
        <taxon>Vaccinia virus</taxon>
    </lineage>
</organism>
<feature type="chain" id="PRO_0000099715" description="Uncharacterized 7.8 kDa protein">
    <location>
        <begin position="1"/>
        <end position="71"/>
    </location>
</feature>
<protein>
    <recommendedName>
        <fullName>Uncharacterized 7.8 kDa protein</fullName>
    </recommendedName>
</protein>
<gene>
    <name type="ORF">F ORF E</name>
</gene>
<dbReference type="EMBL" id="M35027">
    <property type="protein sequence ID" value="AAA48030.1"/>
    <property type="molecule type" value="Genomic_DNA"/>
</dbReference>
<dbReference type="PIR" id="D42506">
    <property type="entry name" value="D42506"/>
</dbReference>
<dbReference type="Proteomes" id="UP000008269">
    <property type="component" value="Segment"/>
</dbReference>
<sequence length="71" mass="7829">MTLVKNMSSILENENILHGLIKTSNAPDCVSNASYKDFKDAIDSLTNDLELRLASDFFIKSNGRLSGLLPQ</sequence>
<organismHost>
    <name type="scientific">Homo sapiens</name>
    <name type="common">Human</name>
    <dbReference type="NCBI Taxonomy" id="9606"/>
</organismHost>
<keyword id="KW-1185">Reference proteome</keyword>
<proteinExistence type="predicted"/>
<accession>P20563</accession>